<keyword id="KW-0067">ATP-binding</keyword>
<keyword id="KW-0963">Cytoplasm</keyword>
<keyword id="KW-0418">Kinase</keyword>
<keyword id="KW-0460">Magnesium</keyword>
<keyword id="KW-0479">Metal-binding</keyword>
<keyword id="KW-0546">Nucleotide metabolism</keyword>
<keyword id="KW-0547">Nucleotide-binding</keyword>
<keyword id="KW-0597">Phosphoprotein</keyword>
<keyword id="KW-1185">Reference proteome</keyword>
<keyword id="KW-0808">Transferase</keyword>
<dbReference type="EC" id="2.7.4.6" evidence="1"/>
<dbReference type="EMBL" id="CP000029">
    <property type="protein sequence ID" value="AAW54428.1"/>
    <property type="molecule type" value="Genomic_DNA"/>
</dbReference>
<dbReference type="RefSeq" id="WP_001831235.1">
    <property type="nucleotide sequence ID" value="NC_002976.3"/>
</dbReference>
<dbReference type="SMR" id="Q5HP76"/>
<dbReference type="STRING" id="176279.SERP1037"/>
<dbReference type="GeneID" id="50018722"/>
<dbReference type="KEGG" id="ser:SERP1037"/>
<dbReference type="eggNOG" id="COG0105">
    <property type="taxonomic scope" value="Bacteria"/>
</dbReference>
<dbReference type="HOGENOM" id="CLU_060216_6_3_9"/>
<dbReference type="Proteomes" id="UP000000531">
    <property type="component" value="Chromosome"/>
</dbReference>
<dbReference type="GO" id="GO:0005737">
    <property type="term" value="C:cytoplasm"/>
    <property type="evidence" value="ECO:0007669"/>
    <property type="project" value="UniProtKB-SubCell"/>
</dbReference>
<dbReference type="GO" id="GO:0005524">
    <property type="term" value="F:ATP binding"/>
    <property type="evidence" value="ECO:0007669"/>
    <property type="project" value="UniProtKB-UniRule"/>
</dbReference>
<dbReference type="GO" id="GO:0046872">
    <property type="term" value="F:metal ion binding"/>
    <property type="evidence" value="ECO:0007669"/>
    <property type="project" value="UniProtKB-KW"/>
</dbReference>
<dbReference type="GO" id="GO:0004550">
    <property type="term" value="F:nucleoside diphosphate kinase activity"/>
    <property type="evidence" value="ECO:0007669"/>
    <property type="project" value="UniProtKB-UniRule"/>
</dbReference>
<dbReference type="GO" id="GO:0006241">
    <property type="term" value="P:CTP biosynthetic process"/>
    <property type="evidence" value="ECO:0007669"/>
    <property type="project" value="UniProtKB-UniRule"/>
</dbReference>
<dbReference type="GO" id="GO:0006183">
    <property type="term" value="P:GTP biosynthetic process"/>
    <property type="evidence" value="ECO:0007669"/>
    <property type="project" value="UniProtKB-UniRule"/>
</dbReference>
<dbReference type="GO" id="GO:0006228">
    <property type="term" value="P:UTP biosynthetic process"/>
    <property type="evidence" value="ECO:0007669"/>
    <property type="project" value="UniProtKB-UniRule"/>
</dbReference>
<dbReference type="CDD" id="cd04413">
    <property type="entry name" value="NDPk_I"/>
    <property type="match status" value="1"/>
</dbReference>
<dbReference type="FunFam" id="3.30.70.141:FF:000002">
    <property type="entry name" value="Nucleoside diphosphate kinase"/>
    <property type="match status" value="1"/>
</dbReference>
<dbReference type="Gene3D" id="3.30.70.141">
    <property type="entry name" value="Nucleoside diphosphate kinase-like domain"/>
    <property type="match status" value="1"/>
</dbReference>
<dbReference type="HAMAP" id="MF_00451">
    <property type="entry name" value="NDP_kinase"/>
    <property type="match status" value="1"/>
</dbReference>
<dbReference type="InterPro" id="IPR034907">
    <property type="entry name" value="NDK-like_dom"/>
</dbReference>
<dbReference type="InterPro" id="IPR036850">
    <property type="entry name" value="NDK-like_dom_sf"/>
</dbReference>
<dbReference type="InterPro" id="IPR001564">
    <property type="entry name" value="Nucleoside_diP_kinase"/>
</dbReference>
<dbReference type="NCBIfam" id="NF001908">
    <property type="entry name" value="PRK00668.1"/>
    <property type="match status" value="1"/>
</dbReference>
<dbReference type="PANTHER" id="PTHR11349">
    <property type="entry name" value="NUCLEOSIDE DIPHOSPHATE KINASE"/>
    <property type="match status" value="1"/>
</dbReference>
<dbReference type="Pfam" id="PF00334">
    <property type="entry name" value="NDK"/>
    <property type="match status" value="1"/>
</dbReference>
<dbReference type="PRINTS" id="PR01243">
    <property type="entry name" value="NUCDPKINASE"/>
</dbReference>
<dbReference type="SMART" id="SM00562">
    <property type="entry name" value="NDK"/>
    <property type="match status" value="1"/>
</dbReference>
<dbReference type="SUPFAM" id="SSF54919">
    <property type="entry name" value="Nucleoside diphosphate kinase, NDK"/>
    <property type="match status" value="1"/>
</dbReference>
<dbReference type="PROSITE" id="PS51374">
    <property type="entry name" value="NDPK_LIKE"/>
    <property type="match status" value="1"/>
</dbReference>
<evidence type="ECO:0000255" key="1">
    <source>
        <dbReference type="HAMAP-Rule" id="MF_00451"/>
    </source>
</evidence>
<comment type="function">
    <text evidence="1">Major role in the synthesis of nucleoside triphosphates other than ATP. The ATP gamma phosphate is transferred to the NDP beta phosphate via a ping-pong mechanism, using a phosphorylated active-site intermediate.</text>
</comment>
<comment type="catalytic activity">
    <reaction evidence="1">
        <text>a 2'-deoxyribonucleoside 5'-diphosphate + ATP = a 2'-deoxyribonucleoside 5'-triphosphate + ADP</text>
        <dbReference type="Rhea" id="RHEA:44640"/>
        <dbReference type="ChEBI" id="CHEBI:30616"/>
        <dbReference type="ChEBI" id="CHEBI:61560"/>
        <dbReference type="ChEBI" id="CHEBI:73316"/>
        <dbReference type="ChEBI" id="CHEBI:456216"/>
        <dbReference type="EC" id="2.7.4.6"/>
    </reaction>
</comment>
<comment type="catalytic activity">
    <reaction evidence="1">
        <text>a ribonucleoside 5'-diphosphate + ATP = a ribonucleoside 5'-triphosphate + ADP</text>
        <dbReference type="Rhea" id="RHEA:18113"/>
        <dbReference type="ChEBI" id="CHEBI:30616"/>
        <dbReference type="ChEBI" id="CHEBI:57930"/>
        <dbReference type="ChEBI" id="CHEBI:61557"/>
        <dbReference type="ChEBI" id="CHEBI:456216"/>
        <dbReference type="EC" id="2.7.4.6"/>
    </reaction>
</comment>
<comment type="cofactor">
    <cofactor evidence="1">
        <name>Mg(2+)</name>
        <dbReference type="ChEBI" id="CHEBI:18420"/>
    </cofactor>
</comment>
<comment type="subunit">
    <text evidence="1">Homotetramer.</text>
</comment>
<comment type="subcellular location">
    <subcellularLocation>
        <location evidence="1">Cytoplasm</location>
    </subcellularLocation>
</comment>
<comment type="similarity">
    <text evidence="1">Belongs to the NDK family.</text>
</comment>
<sequence>MERTFLMIKPDAVQRNLIGEIISRIEKKGLKLVGGKFMQVPMELAEKHYSEHEGKPFYDKLISFITSAPVFAMVVEGENAVAVSRKIIGSTNPSEAAPGTIRGDYGLNLGRNIIHGSDSTESAQREVKLWFTSSEIADYKEPREDWLYE</sequence>
<name>NDK_STAEQ</name>
<reference key="1">
    <citation type="journal article" date="2005" name="J. Bacteriol.">
        <title>Insights on evolution of virulence and resistance from the complete genome analysis of an early methicillin-resistant Staphylococcus aureus strain and a biofilm-producing methicillin-resistant Staphylococcus epidermidis strain.</title>
        <authorList>
            <person name="Gill S.R."/>
            <person name="Fouts D.E."/>
            <person name="Archer G.L."/>
            <person name="Mongodin E.F."/>
            <person name="DeBoy R.T."/>
            <person name="Ravel J."/>
            <person name="Paulsen I.T."/>
            <person name="Kolonay J.F."/>
            <person name="Brinkac L.M."/>
            <person name="Beanan M.J."/>
            <person name="Dodson R.J."/>
            <person name="Daugherty S.C."/>
            <person name="Madupu R."/>
            <person name="Angiuoli S.V."/>
            <person name="Durkin A.S."/>
            <person name="Haft D.H."/>
            <person name="Vamathevan J.J."/>
            <person name="Khouri H."/>
            <person name="Utterback T.R."/>
            <person name="Lee C."/>
            <person name="Dimitrov G."/>
            <person name="Jiang L."/>
            <person name="Qin H."/>
            <person name="Weidman J."/>
            <person name="Tran K."/>
            <person name="Kang K.H."/>
            <person name="Hance I.R."/>
            <person name="Nelson K.E."/>
            <person name="Fraser C.M."/>
        </authorList>
    </citation>
    <scope>NUCLEOTIDE SEQUENCE [LARGE SCALE GENOMIC DNA]</scope>
    <source>
        <strain>ATCC 35984 / DSM 28319 / BCRC 17069 / CCUG 31568 / BM 3577 / RP62A</strain>
    </source>
</reference>
<accession>Q5HP76</accession>
<proteinExistence type="inferred from homology"/>
<gene>
    <name evidence="1" type="primary">ndk</name>
    <name type="ordered locus">SERP1037</name>
</gene>
<feature type="chain" id="PRO_0000137052" description="Nucleoside diphosphate kinase">
    <location>
        <begin position="1"/>
        <end position="149"/>
    </location>
</feature>
<feature type="active site" description="Pros-phosphohistidine intermediate" evidence="1">
    <location>
        <position position="115"/>
    </location>
</feature>
<feature type="binding site" evidence="1">
    <location>
        <position position="9"/>
    </location>
    <ligand>
        <name>ATP</name>
        <dbReference type="ChEBI" id="CHEBI:30616"/>
    </ligand>
</feature>
<feature type="binding site" evidence="1">
    <location>
        <position position="57"/>
    </location>
    <ligand>
        <name>ATP</name>
        <dbReference type="ChEBI" id="CHEBI:30616"/>
    </ligand>
</feature>
<feature type="binding site" evidence="1">
    <location>
        <position position="85"/>
    </location>
    <ligand>
        <name>ATP</name>
        <dbReference type="ChEBI" id="CHEBI:30616"/>
    </ligand>
</feature>
<feature type="binding site" evidence="1">
    <location>
        <position position="91"/>
    </location>
    <ligand>
        <name>ATP</name>
        <dbReference type="ChEBI" id="CHEBI:30616"/>
    </ligand>
</feature>
<feature type="binding site" evidence="1">
    <location>
        <position position="102"/>
    </location>
    <ligand>
        <name>ATP</name>
        <dbReference type="ChEBI" id="CHEBI:30616"/>
    </ligand>
</feature>
<feature type="binding site" evidence="1">
    <location>
        <position position="112"/>
    </location>
    <ligand>
        <name>ATP</name>
        <dbReference type="ChEBI" id="CHEBI:30616"/>
    </ligand>
</feature>
<organism>
    <name type="scientific">Staphylococcus epidermidis (strain ATCC 35984 / DSM 28319 / BCRC 17069 / CCUG 31568 / BM 3577 / RP62A)</name>
    <dbReference type="NCBI Taxonomy" id="176279"/>
    <lineage>
        <taxon>Bacteria</taxon>
        <taxon>Bacillati</taxon>
        <taxon>Bacillota</taxon>
        <taxon>Bacilli</taxon>
        <taxon>Bacillales</taxon>
        <taxon>Staphylococcaceae</taxon>
        <taxon>Staphylococcus</taxon>
    </lineage>
</organism>
<protein>
    <recommendedName>
        <fullName evidence="1">Nucleoside diphosphate kinase</fullName>
        <shortName evidence="1">NDK</shortName>
        <shortName evidence="1">NDP kinase</shortName>
        <ecNumber evidence="1">2.7.4.6</ecNumber>
    </recommendedName>
    <alternativeName>
        <fullName evidence="1">Nucleoside-2-P kinase</fullName>
    </alternativeName>
</protein>